<protein>
    <recommendedName>
        <fullName>Inner membrane protein YnjF</fullName>
    </recommendedName>
</protein>
<gene>
    <name type="primary">ynjF</name>
    <name type="ordered locus">b1758</name>
    <name type="ordered locus">JW1747</name>
</gene>
<reference key="1">
    <citation type="journal article" date="1997" name="Science">
        <title>The complete genome sequence of Escherichia coli K-12.</title>
        <authorList>
            <person name="Blattner F.R."/>
            <person name="Plunkett G. III"/>
            <person name="Bloch C.A."/>
            <person name="Perna N.T."/>
            <person name="Burland V."/>
            <person name="Riley M."/>
            <person name="Collado-Vides J."/>
            <person name="Glasner J.D."/>
            <person name="Rode C.K."/>
            <person name="Mayhew G.F."/>
            <person name="Gregor J."/>
            <person name="Davis N.W."/>
            <person name="Kirkpatrick H.A."/>
            <person name="Goeden M.A."/>
            <person name="Rose D.J."/>
            <person name="Mau B."/>
            <person name="Shao Y."/>
        </authorList>
    </citation>
    <scope>NUCLEOTIDE SEQUENCE [LARGE SCALE GENOMIC DNA]</scope>
    <source>
        <strain>K12 / MG1655 / ATCC 47076</strain>
    </source>
</reference>
<reference key="2">
    <citation type="journal article" date="2006" name="Mol. Syst. Biol.">
        <title>Highly accurate genome sequences of Escherichia coli K-12 strains MG1655 and W3110.</title>
        <authorList>
            <person name="Hayashi K."/>
            <person name="Morooka N."/>
            <person name="Yamamoto Y."/>
            <person name="Fujita K."/>
            <person name="Isono K."/>
            <person name="Choi S."/>
            <person name="Ohtsubo E."/>
            <person name="Baba T."/>
            <person name="Wanner B.L."/>
            <person name="Mori H."/>
            <person name="Horiuchi T."/>
        </authorList>
    </citation>
    <scope>NUCLEOTIDE SEQUENCE [LARGE SCALE GENOMIC DNA]</scope>
    <source>
        <strain>K12 / W3110 / ATCC 27325 / DSM 5911</strain>
    </source>
</reference>
<reference key="3">
    <citation type="journal article" date="2005" name="Science">
        <title>Global topology analysis of the Escherichia coli inner membrane proteome.</title>
        <authorList>
            <person name="Daley D.O."/>
            <person name="Rapp M."/>
            <person name="Granseth E."/>
            <person name="Melen K."/>
            <person name="Drew D."/>
            <person name="von Heijne G."/>
        </authorList>
    </citation>
    <scope>TOPOLOGY [LARGE SCALE ANALYSIS]</scope>
    <source>
        <strain>K12 / MG1655 / ATCC 47076</strain>
    </source>
</reference>
<keyword id="KW-0997">Cell inner membrane</keyword>
<keyword id="KW-1003">Cell membrane</keyword>
<keyword id="KW-0472">Membrane</keyword>
<keyword id="KW-1185">Reference proteome</keyword>
<keyword id="KW-0808">Transferase</keyword>
<keyword id="KW-0812">Transmembrane</keyword>
<keyword id="KW-1133">Transmembrane helix</keyword>
<sequence>MLDRHLHPRIKPLLHQCVRVLDKPGITPDGLTLVGFAIGVLALPFLALGWYLAALVVILLNRLLDGLDGALARRRELTDAGGFLDISLDFLFYALVPFGFILAAPEQNALAGGWLLFAFIGTGSSFLAFAALAAKHQIDNPGYAHKSFYYLGGLTEGTETILLFVLGCLFPAWFAWFAWIFGALCWMTTFTRVWSGYLTLKSLQRQ</sequence>
<evidence type="ECO:0000255" key="1"/>
<evidence type="ECO:0000305" key="2"/>
<proteinExistence type="evidence at protein level"/>
<name>YNJF_ECOLI</name>
<dbReference type="EMBL" id="U00096">
    <property type="protein sequence ID" value="AAC74828.2"/>
    <property type="molecule type" value="Genomic_DNA"/>
</dbReference>
<dbReference type="EMBL" id="AP009048">
    <property type="protein sequence ID" value="BAE76522.1"/>
    <property type="molecule type" value="Genomic_DNA"/>
</dbReference>
<dbReference type="PIR" id="F64935">
    <property type="entry name" value="F64935"/>
</dbReference>
<dbReference type="RefSeq" id="NP_416272.2">
    <property type="nucleotide sequence ID" value="NC_000913.3"/>
</dbReference>
<dbReference type="RefSeq" id="WP_001295484.1">
    <property type="nucleotide sequence ID" value="NZ_SSZK01000001.1"/>
</dbReference>
<dbReference type="SMR" id="P76226"/>
<dbReference type="BioGRID" id="4259711">
    <property type="interactions" value="165"/>
</dbReference>
<dbReference type="FunCoup" id="P76226">
    <property type="interactions" value="190"/>
</dbReference>
<dbReference type="STRING" id="511145.b1758"/>
<dbReference type="PaxDb" id="511145-b1758"/>
<dbReference type="EnsemblBacteria" id="AAC74828">
    <property type="protein sequence ID" value="AAC74828"/>
    <property type="gene ID" value="b1758"/>
</dbReference>
<dbReference type="GeneID" id="946221"/>
<dbReference type="KEGG" id="ecj:JW1747"/>
<dbReference type="KEGG" id="eco:b1758"/>
<dbReference type="KEGG" id="ecoc:C3026_10035"/>
<dbReference type="PATRIC" id="fig|1411691.4.peg.497"/>
<dbReference type="EchoBASE" id="EB3764"/>
<dbReference type="eggNOG" id="COG0558">
    <property type="taxonomic scope" value="Bacteria"/>
</dbReference>
<dbReference type="HOGENOM" id="CLU_080384_2_0_6"/>
<dbReference type="InParanoid" id="P76226"/>
<dbReference type="OMA" id="AFCIWPQ"/>
<dbReference type="OrthoDB" id="9790577at2"/>
<dbReference type="PhylomeDB" id="P76226"/>
<dbReference type="BioCyc" id="EcoCyc:G6953-MONOMER"/>
<dbReference type="PRO" id="PR:P76226"/>
<dbReference type="Proteomes" id="UP000000625">
    <property type="component" value="Chromosome"/>
</dbReference>
<dbReference type="GO" id="GO:0005886">
    <property type="term" value="C:plasma membrane"/>
    <property type="evidence" value="ECO:0000314"/>
    <property type="project" value="EcoCyc"/>
</dbReference>
<dbReference type="GO" id="GO:0016780">
    <property type="term" value="F:phosphotransferase activity, for other substituted phosphate groups"/>
    <property type="evidence" value="ECO:0007669"/>
    <property type="project" value="InterPro"/>
</dbReference>
<dbReference type="GO" id="GO:0008654">
    <property type="term" value="P:phospholipid biosynthetic process"/>
    <property type="evidence" value="ECO:0007669"/>
    <property type="project" value="InterPro"/>
</dbReference>
<dbReference type="FunFam" id="1.20.120.1760:FF:000013">
    <property type="entry name" value="Inner membrane protein YnjF"/>
    <property type="match status" value="1"/>
</dbReference>
<dbReference type="Gene3D" id="1.20.120.1760">
    <property type="match status" value="1"/>
</dbReference>
<dbReference type="InterPro" id="IPR000462">
    <property type="entry name" value="CDP-OH_P_trans"/>
</dbReference>
<dbReference type="InterPro" id="IPR043130">
    <property type="entry name" value="CDP-OH_PTrfase_TM_dom"/>
</dbReference>
<dbReference type="InterPro" id="IPR048254">
    <property type="entry name" value="CDP_ALCOHOL_P_TRANSF_CS"/>
</dbReference>
<dbReference type="Pfam" id="PF01066">
    <property type="entry name" value="CDP-OH_P_transf"/>
    <property type="match status" value="1"/>
</dbReference>
<dbReference type="PROSITE" id="PS00379">
    <property type="entry name" value="CDP_ALCOHOL_P_TRANSF"/>
    <property type="match status" value="1"/>
</dbReference>
<comment type="subcellular location">
    <subcellularLocation>
        <location>Cell inner membrane</location>
        <topology>Multi-pass membrane protein</topology>
    </subcellularLocation>
</comment>
<comment type="similarity">
    <text evidence="2">Belongs to the CDP-alcohol phosphatidyltransferase class-I family.</text>
</comment>
<accession>P76226</accession>
<accession>Q2MB34</accession>
<organism>
    <name type="scientific">Escherichia coli (strain K12)</name>
    <dbReference type="NCBI Taxonomy" id="83333"/>
    <lineage>
        <taxon>Bacteria</taxon>
        <taxon>Pseudomonadati</taxon>
        <taxon>Pseudomonadota</taxon>
        <taxon>Gammaproteobacteria</taxon>
        <taxon>Enterobacterales</taxon>
        <taxon>Enterobacteriaceae</taxon>
        <taxon>Escherichia</taxon>
    </lineage>
</organism>
<feature type="chain" id="PRO_0000056821" description="Inner membrane protein YnjF">
    <location>
        <begin position="1"/>
        <end position="206"/>
    </location>
</feature>
<feature type="topological domain" description="Periplasmic" evidence="1">
    <location>
        <begin position="1"/>
        <end position="37"/>
    </location>
</feature>
<feature type="transmembrane region" description="Helical" evidence="1">
    <location>
        <begin position="38"/>
        <end position="60"/>
    </location>
</feature>
<feature type="topological domain" description="Cytoplasmic" evidence="1">
    <location>
        <begin position="61"/>
        <end position="79"/>
    </location>
</feature>
<feature type="transmembrane region" description="Helical" evidence="1">
    <location>
        <begin position="80"/>
        <end position="102"/>
    </location>
</feature>
<feature type="topological domain" description="Periplasmic" evidence="1">
    <location>
        <begin position="103"/>
        <end position="111"/>
    </location>
</feature>
<feature type="transmembrane region" description="Helical" evidence="1">
    <location>
        <begin position="112"/>
        <end position="134"/>
    </location>
</feature>
<feature type="topological domain" description="Cytoplasmic" evidence="1">
    <location>
        <begin position="135"/>
        <end position="146"/>
    </location>
</feature>
<feature type="transmembrane region" description="Helical" evidence="1">
    <location>
        <begin position="147"/>
        <end position="169"/>
    </location>
</feature>
<feature type="topological domain" description="Periplasmic" evidence="1">
    <location>
        <begin position="170"/>
        <end position="173"/>
    </location>
</feature>
<feature type="transmembrane region" description="Helical" evidence="1">
    <location>
        <begin position="174"/>
        <end position="196"/>
    </location>
</feature>
<feature type="topological domain" description="Cytoplasmic" evidence="1">
    <location>
        <begin position="197"/>
        <end position="206"/>
    </location>
</feature>